<evidence type="ECO:0000255" key="1">
    <source>
        <dbReference type="HAMAP-Rule" id="MF_00605"/>
    </source>
</evidence>
<protein>
    <recommendedName>
        <fullName evidence="1">tRNA (guanine-N(1)-)-methyltransferase</fullName>
        <ecNumber evidence="1">2.1.1.228</ecNumber>
    </recommendedName>
    <alternativeName>
        <fullName evidence="1">M1G-methyltransferase</fullName>
    </alternativeName>
    <alternativeName>
        <fullName evidence="1">tRNA [GM37] methyltransferase</fullName>
    </alternativeName>
</protein>
<sequence>MKITILSLFPSIITPFFENSIMKKVVDRGIISYEVISIRDFSDDKHKRCDDIPYGGGAGMVLKAPPISAALEYVNAKSKTTIFVSPSGLKYTQKLAYDLSKKSELVIICGRYEGLDQRVIDLYVDLEVSVGDYVLSSGEVAALVIIDSVYRLLDGAINPSSLLEESFSFDCGLLEYPHYTRPYEFKGLEVPDVLLSGHHEEIKKWRFIKSVEKTKKNRYDLYLKYLEMIGENDGFSKKN</sequence>
<accession>B2S140</accession>
<gene>
    <name evidence="1" type="primary">trmD</name>
    <name type="ordered locus">BH0698</name>
</gene>
<reference key="1">
    <citation type="submission" date="2004-12" db="EMBL/GenBank/DDBJ databases">
        <title>The genome sequence of Borrelia hermsii and Borrelia turicatae: comparative analysis of two agents of endemic N. America relapsing fever.</title>
        <authorList>
            <person name="Porcella S.F."/>
            <person name="Raffel S.J."/>
            <person name="Schrumpf M.E."/>
            <person name="Montgomery B."/>
            <person name="Smith T."/>
            <person name="Schwan T.G."/>
        </authorList>
    </citation>
    <scope>NUCLEOTIDE SEQUENCE [LARGE SCALE GENOMIC DNA]</scope>
    <source>
        <strain>HS1 / DAH</strain>
    </source>
</reference>
<organism>
    <name type="scientific">Borrelia hermsii (strain HS1 / DAH)</name>
    <dbReference type="NCBI Taxonomy" id="314723"/>
    <lineage>
        <taxon>Bacteria</taxon>
        <taxon>Pseudomonadati</taxon>
        <taxon>Spirochaetota</taxon>
        <taxon>Spirochaetia</taxon>
        <taxon>Spirochaetales</taxon>
        <taxon>Borreliaceae</taxon>
        <taxon>Borrelia</taxon>
    </lineage>
</organism>
<comment type="function">
    <text evidence="1">Specifically methylates guanosine-37 in various tRNAs.</text>
</comment>
<comment type="catalytic activity">
    <reaction evidence="1">
        <text>guanosine(37) in tRNA + S-adenosyl-L-methionine = N(1)-methylguanosine(37) in tRNA + S-adenosyl-L-homocysteine + H(+)</text>
        <dbReference type="Rhea" id="RHEA:36899"/>
        <dbReference type="Rhea" id="RHEA-COMP:10145"/>
        <dbReference type="Rhea" id="RHEA-COMP:10147"/>
        <dbReference type="ChEBI" id="CHEBI:15378"/>
        <dbReference type="ChEBI" id="CHEBI:57856"/>
        <dbReference type="ChEBI" id="CHEBI:59789"/>
        <dbReference type="ChEBI" id="CHEBI:73542"/>
        <dbReference type="ChEBI" id="CHEBI:74269"/>
        <dbReference type="EC" id="2.1.1.228"/>
    </reaction>
</comment>
<comment type="subunit">
    <text evidence="1">Homodimer.</text>
</comment>
<comment type="subcellular location">
    <subcellularLocation>
        <location evidence="1">Cytoplasm</location>
    </subcellularLocation>
</comment>
<comment type="similarity">
    <text evidence="1">Belongs to the RNA methyltransferase TrmD family.</text>
</comment>
<feature type="chain" id="PRO_1000130138" description="tRNA (guanine-N(1)-)-methyltransferase">
    <location>
        <begin position="1"/>
        <end position="239"/>
    </location>
</feature>
<feature type="binding site" evidence="1">
    <location>
        <position position="110"/>
    </location>
    <ligand>
        <name>S-adenosyl-L-methionine</name>
        <dbReference type="ChEBI" id="CHEBI:59789"/>
    </ligand>
</feature>
<feature type="binding site" evidence="1">
    <location>
        <begin position="130"/>
        <end position="135"/>
    </location>
    <ligand>
        <name>S-adenosyl-L-methionine</name>
        <dbReference type="ChEBI" id="CHEBI:59789"/>
    </ligand>
</feature>
<keyword id="KW-0963">Cytoplasm</keyword>
<keyword id="KW-0489">Methyltransferase</keyword>
<keyword id="KW-0949">S-adenosyl-L-methionine</keyword>
<keyword id="KW-0808">Transferase</keyword>
<keyword id="KW-0819">tRNA processing</keyword>
<proteinExistence type="inferred from homology"/>
<name>TRMD_BORHD</name>
<dbReference type="EC" id="2.1.1.228" evidence="1"/>
<dbReference type="EMBL" id="CP000048">
    <property type="protein sequence ID" value="AAX17196.1"/>
    <property type="molecule type" value="Genomic_DNA"/>
</dbReference>
<dbReference type="RefSeq" id="WP_012422446.1">
    <property type="nucleotide sequence ID" value="NZ_CP073136.1"/>
</dbReference>
<dbReference type="SMR" id="B2S140"/>
<dbReference type="KEGG" id="bhr:BH0698"/>
<dbReference type="HOGENOM" id="CLU_047363_0_1_12"/>
<dbReference type="Proteomes" id="UP000008834">
    <property type="component" value="Chromosome"/>
</dbReference>
<dbReference type="GO" id="GO:0005829">
    <property type="term" value="C:cytosol"/>
    <property type="evidence" value="ECO:0007669"/>
    <property type="project" value="TreeGrafter"/>
</dbReference>
<dbReference type="GO" id="GO:0052906">
    <property type="term" value="F:tRNA (guanine(37)-N1)-methyltransferase activity"/>
    <property type="evidence" value="ECO:0007669"/>
    <property type="project" value="UniProtKB-UniRule"/>
</dbReference>
<dbReference type="GO" id="GO:0002939">
    <property type="term" value="P:tRNA N1-guanine methylation"/>
    <property type="evidence" value="ECO:0007669"/>
    <property type="project" value="TreeGrafter"/>
</dbReference>
<dbReference type="CDD" id="cd18080">
    <property type="entry name" value="TrmD-like"/>
    <property type="match status" value="1"/>
</dbReference>
<dbReference type="FunFam" id="3.40.1280.10:FF:000001">
    <property type="entry name" value="tRNA (guanine-N(1)-)-methyltransferase"/>
    <property type="match status" value="1"/>
</dbReference>
<dbReference type="Gene3D" id="3.40.1280.10">
    <property type="match status" value="1"/>
</dbReference>
<dbReference type="Gene3D" id="1.10.1270.20">
    <property type="entry name" value="tRNA(m1g37)methyltransferase, domain 2"/>
    <property type="match status" value="1"/>
</dbReference>
<dbReference type="HAMAP" id="MF_00605">
    <property type="entry name" value="TrmD"/>
    <property type="match status" value="1"/>
</dbReference>
<dbReference type="InterPro" id="IPR029028">
    <property type="entry name" value="Alpha/beta_knot_MTases"/>
</dbReference>
<dbReference type="InterPro" id="IPR023148">
    <property type="entry name" value="tRNA_m1G_MeTrfase_C_sf"/>
</dbReference>
<dbReference type="InterPro" id="IPR002649">
    <property type="entry name" value="tRNA_m1G_MeTrfase_TrmD"/>
</dbReference>
<dbReference type="InterPro" id="IPR029026">
    <property type="entry name" value="tRNA_m1G_MTases_N"/>
</dbReference>
<dbReference type="InterPro" id="IPR016009">
    <property type="entry name" value="tRNA_MeTrfase_TRMD/TRM10"/>
</dbReference>
<dbReference type="NCBIfam" id="NF000648">
    <property type="entry name" value="PRK00026.1"/>
    <property type="match status" value="1"/>
</dbReference>
<dbReference type="NCBIfam" id="TIGR00088">
    <property type="entry name" value="trmD"/>
    <property type="match status" value="1"/>
</dbReference>
<dbReference type="PANTHER" id="PTHR46417">
    <property type="entry name" value="TRNA (GUANINE-N(1)-)-METHYLTRANSFERASE"/>
    <property type="match status" value="1"/>
</dbReference>
<dbReference type="PANTHER" id="PTHR46417:SF1">
    <property type="entry name" value="TRNA (GUANINE-N(1)-)-METHYLTRANSFERASE"/>
    <property type="match status" value="1"/>
</dbReference>
<dbReference type="Pfam" id="PF01746">
    <property type="entry name" value="tRNA_m1G_MT"/>
    <property type="match status" value="1"/>
</dbReference>
<dbReference type="PIRSF" id="PIRSF000386">
    <property type="entry name" value="tRNA_mtase"/>
    <property type="match status" value="1"/>
</dbReference>
<dbReference type="SUPFAM" id="SSF75217">
    <property type="entry name" value="alpha/beta knot"/>
    <property type="match status" value="1"/>
</dbReference>